<accession>Q5UQN3</accession>
<reference key="1">
    <citation type="journal article" date="2004" name="Science">
        <title>The 1.2-megabase genome sequence of Mimivirus.</title>
        <authorList>
            <person name="Raoult D."/>
            <person name="Audic S."/>
            <person name="Robert C."/>
            <person name="Abergel C."/>
            <person name="Renesto P."/>
            <person name="Ogata H."/>
            <person name="La Scola B."/>
            <person name="Susan M."/>
            <person name="Claverie J.-M."/>
        </authorList>
    </citation>
    <scope>NUCLEOTIDE SEQUENCE [LARGE SCALE GENOMIC DNA]</scope>
    <source>
        <strain>Rowbotham-Bradford</strain>
    </source>
</reference>
<organism>
    <name type="scientific">Acanthamoeba polyphaga mimivirus</name>
    <name type="common">APMV</name>
    <dbReference type="NCBI Taxonomy" id="212035"/>
    <lineage>
        <taxon>Viruses</taxon>
        <taxon>Varidnaviria</taxon>
        <taxon>Bamfordvirae</taxon>
        <taxon>Nucleocytoviricota</taxon>
        <taxon>Megaviricetes</taxon>
        <taxon>Imitervirales</taxon>
        <taxon>Mimiviridae</taxon>
        <taxon>Megamimivirinae</taxon>
        <taxon>Mimivirus</taxon>
        <taxon>Mimivirus bradfordmassiliense</taxon>
    </lineage>
</organism>
<organismHost>
    <name type="scientific">Acanthamoeba polyphaga</name>
    <name type="common">Amoeba</name>
    <dbReference type="NCBI Taxonomy" id="5757"/>
</organismHost>
<keyword id="KW-1185">Reference proteome</keyword>
<sequence>MDQYQKIIIKGKQYYSTKDIKDFSPEFFYGCNNKLRRIIEKKNIPNKDIVYGYYKNNELIVCDDTYPKTTLYLSEKWVNKFVPEATPETEVIPNIQKLPPIIDIDNAEMWCDENSNPYNTRIRDCP</sequence>
<dbReference type="EMBL" id="AY653733">
    <property type="protein sequence ID" value="AAV50702.1"/>
    <property type="molecule type" value="Genomic_DNA"/>
</dbReference>
<dbReference type="KEGG" id="vg:9925054"/>
<dbReference type="Proteomes" id="UP000001134">
    <property type="component" value="Genome"/>
</dbReference>
<gene>
    <name type="ordered locus">MIMI_R433</name>
</gene>
<name>YR433_MIMIV</name>
<feature type="chain" id="PRO_0000253918" description="Uncharacterized protein R433">
    <location>
        <begin position="1"/>
        <end position="126"/>
    </location>
</feature>
<protein>
    <recommendedName>
        <fullName>Uncharacterized protein R433</fullName>
    </recommendedName>
</protein>
<proteinExistence type="predicted"/>